<feature type="chain" id="PRO_0000232882" description="Acyl-CoA-binding domain-containing protein 6">
    <location>
        <begin position="1"/>
        <end position="300"/>
    </location>
</feature>
<feature type="domain" description="ACB" evidence="3">
    <location>
        <begin position="60"/>
        <end position="145"/>
    </location>
</feature>
<feature type="repeat" description="ANK 1">
    <location>
        <begin position="209"/>
        <end position="238"/>
    </location>
</feature>
<feature type="repeat" description="ANK 2">
    <location>
        <begin position="242"/>
        <end position="271"/>
    </location>
</feature>
<feature type="region of interest" description="Disordered" evidence="4">
    <location>
        <begin position="1"/>
        <end position="43"/>
    </location>
</feature>
<feature type="region of interest" description="Disordered" evidence="4">
    <location>
        <begin position="142"/>
        <end position="162"/>
    </location>
</feature>
<feature type="region of interest" description="Disordered" evidence="4">
    <location>
        <begin position="270"/>
        <end position="300"/>
    </location>
</feature>
<feature type="compositionally biased region" description="Low complexity" evidence="4">
    <location>
        <begin position="1"/>
        <end position="19"/>
    </location>
</feature>
<feature type="compositionally biased region" description="Basic and acidic residues" evidence="4">
    <location>
        <begin position="147"/>
        <end position="157"/>
    </location>
</feature>
<feature type="compositionally biased region" description="Polar residues" evidence="4">
    <location>
        <begin position="284"/>
        <end position="293"/>
    </location>
</feature>
<feature type="binding site" evidence="1">
    <location>
        <begin position="87"/>
        <end position="91"/>
    </location>
    <ligand>
        <name>an acyl-CoA</name>
        <dbReference type="ChEBI" id="CHEBI:58342"/>
    </ligand>
</feature>
<feature type="binding site" evidence="1">
    <location>
        <position position="113"/>
    </location>
    <ligand>
        <name>an acyl-CoA</name>
        <dbReference type="ChEBI" id="CHEBI:58342"/>
    </ligand>
</feature>
<feature type="binding site" evidence="1">
    <location>
        <position position="132"/>
    </location>
    <ligand>
        <name>an acyl-CoA</name>
        <dbReference type="ChEBI" id="CHEBI:58342"/>
    </ligand>
</feature>
<accession>Q4V8X4</accession>
<dbReference type="EMBL" id="BC097158">
    <property type="protein sequence ID" value="AAH97158.1"/>
    <property type="molecule type" value="mRNA"/>
</dbReference>
<dbReference type="RefSeq" id="NP_001020626.1">
    <property type="nucleotide sequence ID" value="NM_001025455.1"/>
</dbReference>
<dbReference type="SMR" id="Q4V8X4"/>
<dbReference type="FunCoup" id="Q4V8X4">
    <property type="interactions" value="1098"/>
</dbReference>
<dbReference type="STRING" id="7955.ENSDARP00000057641"/>
<dbReference type="PaxDb" id="7955-ENSDARP00000057641"/>
<dbReference type="GeneID" id="324090"/>
<dbReference type="KEGG" id="dre:324090"/>
<dbReference type="AGR" id="ZFIN:ZDB-GENE-030131-2810"/>
<dbReference type="CTD" id="84320"/>
<dbReference type="ZFIN" id="ZDB-GENE-030131-2810">
    <property type="gene designation" value="acbd6"/>
</dbReference>
<dbReference type="eggNOG" id="KOG0817">
    <property type="taxonomic scope" value="Eukaryota"/>
</dbReference>
<dbReference type="InParanoid" id="Q4V8X4"/>
<dbReference type="OrthoDB" id="10254927at2759"/>
<dbReference type="PhylomeDB" id="Q4V8X4"/>
<dbReference type="Reactome" id="R-DRE-77289">
    <property type="pathway name" value="Mitochondrial Fatty Acid Beta-Oxidation"/>
</dbReference>
<dbReference type="PRO" id="PR:Q4V8X4"/>
<dbReference type="Proteomes" id="UP000000437">
    <property type="component" value="Chromosome 8"/>
</dbReference>
<dbReference type="GO" id="GO:0005737">
    <property type="term" value="C:cytoplasm"/>
    <property type="evidence" value="ECO:0007669"/>
    <property type="project" value="UniProtKB-SubCell"/>
</dbReference>
<dbReference type="GO" id="GO:0005634">
    <property type="term" value="C:nucleus"/>
    <property type="evidence" value="ECO:0000250"/>
    <property type="project" value="UniProtKB"/>
</dbReference>
<dbReference type="GO" id="GO:0000062">
    <property type="term" value="F:fatty-acyl-CoA binding"/>
    <property type="evidence" value="ECO:0000315"/>
    <property type="project" value="UniProtKB"/>
</dbReference>
<dbReference type="GO" id="GO:0008289">
    <property type="term" value="F:lipid binding"/>
    <property type="evidence" value="ECO:0000315"/>
    <property type="project" value="UniProtKB"/>
</dbReference>
<dbReference type="FunFam" id="1.20.80.10:FF:000022">
    <property type="entry name" value="acyl-CoA-binding domain-containing protein 6 isoform X1"/>
    <property type="match status" value="1"/>
</dbReference>
<dbReference type="Gene3D" id="1.20.80.10">
    <property type="match status" value="1"/>
</dbReference>
<dbReference type="Gene3D" id="1.25.40.20">
    <property type="entry name" value="Ankyrin repeat-containing domain"/>
    <property type="match status" value="1"/>
</dbReference>
<dbReference type="InterPro" id="IPR000582">
    <property type="entry name" value="Acyl-CoA-binding_protein"/>
</dbReference>
<dbReference type="InterPro" id="IPR035984">
    <property type="entry name" value="Acyl-CoA-binding_sf"/>
</dbReference>
<dbReference type="InterPro" id="IPR002110">
    <property type="entry name" value="Ankyrin_rpt"/>
</dbReference>
<dbReference type="InterPro" id="IPR036770">
    <property type="entry name" value="Ankyrin_rpt-contain_sf"/>
</dbReference>
<dbReference type="InterPro" id="IPR014352">
    <property type="entry name" value="FERM/acyl-CoA-bd_prot_sf"/>
</dbReference>
<dbReference type="PANTHER" id="PTHR24119">
    <property type="entry name" value="ACYL-COA-BINDING DOMAIN-CONTAINING PROTEIN 6"/>
    <property type="match status" value="1"/>
</dbReference>
<dbReference type="PANTHER" id="PTHR24119:SF0">
    <property type="entry name" value="ACYL-COA-BINDING DOMAIN-CONTAINING PROTEIN 6"/>
    <property type="match status" value="1"/>
</dbReference>
<dbReference type="Pfam" id="PF00887">
    <property type="entry name" value="ACBP"/>
    <property type="match status" value="1"/>
</dbReference>
<dbReference type="Pfam" id="PF12796">
    <property type="entry name" value="Ank_2"/>
    <property type="match status" value="1"/>
</dbReference>
<dbReference type="PRINTS" id="PR00689">
    <property type="entry name" value="ACOABINDINGP"/>
</dbReference>
<dbReference type="PRINTS" id="PR01415">
    <property type="entry name" value="ANKYRIN"/>
</dbReference>
<dbReference type="SMART" id="SM00248">
    <property type="entry name" value="ANK"/>
    <property type="match status" value="2"/>
</dbReference>
<dbReference type="SUPFAM" id="SSF47027">
    <property type="entry name" value="Acyl-CoA binding protein"/>
    <property type="match status" value="1"/>
</dbReference>
<dbReference type="SUPFAM" id="SSF48403">
    <property type="entry name" value="Ankyrin repeat"/>
    <property type="match status" value="1"/>
</dbReference>
<dbReference type="PROSITE" id="PS51228">
    <property type="entry name" value="ACB_2"/>
    <property type="match status" value="1"/>
</dbReference>
<dbReference type="PROSITE" id="PS50297">
    <property type="entry name" value="ANK_REP_REGION"/>
    <property type="match status" value="1"/>
</dbReference>
<dbReference type="PROSITE" id="PS50088">
    <property type="entry name" value="ANK_REPEAT"/>
    <property type="match status" value="2"/>
</dbReference>
<sequence>MASRSPSSSPDSATGSGTDPARPDTGEPLGGGSDSDSDFGLGKFDCSAGDASARLEGADLENEFESAADRVRDLVQTASREQLLYLYARFKQVKVGKCNTSKPGFFDFEGQRKWSAWKQLGDMSAEQAMQEYVTCVHALDPEGSQKSSERRGGEKRTGFGGPAVSSLYQEEKIREEDKNIFDYCRENNIEHVSKAISSKTVDVNTRDEEGRALLHWACDRGHKDLVSLLLQNNADINSQDDEGQTALHYASACEFAEIVELLLKAGADPSIKDQEGSLPEEVTESSAISSLLRQYTAPKG</sequence>
<evidence type="ECO:0000250" key="1"/>
<evidence type="ECO:0000250" key="2">
    <source>
        <dbReference type="UniProtKB" id="Q9BR61"/>
    </source>
</evidence>
<evidence type="ECO:0000255" key="3">
    <source>
        <dbReference type="PROSITE-ProRule" id="PRU00573"/>
    </source>
</evidence>
<evidence type="ECO:0000256" key="4">
    <source>
        <dbReference type="SAM" id="MobiDB-lite"/>
    </source>
</evidence>
<evidence type="ECO:0000269" key="5">
    <source>
    </source>
</evidence>
<keyword id="KW-0040">ANK repeat</keyword>
<keyword id="KW-0963">Cytoplasm</keyword>
<keyword id="KW-0446">Lipid-binding</keyword>
<keyword id="KW-0539">Nucleus</keyword>
<keyword id="KW-1185">Reference proteome</keyword>
<keyword id="KW-0677">Repeat</keyword>
<comment type="function">
    <text evidence="5">Binds long-chain acyl-coenzyme A molecules with a strong preference for unsaturated C18:1-CoA. Does not bind fatty acids. Plays a role in protein N-myristoylation (PubMed:37951597).</text>
</comment>
<comment type="subcellular location">
    <subcellularLocation>
        <location evidence="2">Cytoplasm</location>
    </subcellularLocation>
    <subcellularLocation>
        <location evidence="2">Nucleus</location>
    </subcellularLocation>
</comment>
<comment type="tissue specificity">
    <text evidence="5">Higly expressed in the central nervous system, developing eyes, otic vesicle, and trunk muscles.</text>
</comment>
<comment type="developmental stage">
    <text evidence="5">Broadly expressed at 24 hours post-fertilization.</text>
</comment>
<comment type="disruption phenotype">
    <text evidence="5">Knockout animals, generated by CRISP-Cas technology, show an exaggerated response after lights are turned off, a reduced locomotor activity in dark period, light-induced seizure-like behavior, and excessive axonal arborizations and progressive degeneration of muscle fibers. Brain size is significantly reduced compared to controls, and musculature is disrupted. Proteomics analysis shows increased protein N-myristoylation in crispant animals.</text>
</comment>
<reference key="1">
    <citation type="submission" date="2005-06" db="EMBL/GenBank/DDBJ databases">
        <authorList>
            <consortium name="NIH - Zebrafish Gene Collection (ZGC) project"/>
        </authorList>
    </citation>
    <scope>NUCLEOTIDE SEQUENCE [LARGE SCALE MRNA]</scope>
    <source>
        <tissue>Embryo</tissue>
    </source>
</reference>
<reference key="2">
    <citation type="journal article" date="2024" name="Brain">
        <title>Bi-allelic ACBD6 variants lead to a neurodevelopmental syndrome with progressive and complex movement disorders.</title>
        <authorList>
            <person name="Kaiyrzhanov R."/>
            <person name="Rad A."/>
            <person name="Lin S.J."/>
            <person name="Bertoli-Avella A."/>
            <person name="Kallemeijn W.W."/>
            <person name="Godwin A."/>
            <person name="Zaki M.S."/>
            <person name="Huang K."/>
            <person name="Lau T."/>
            <person name="Petree C."/>
            <person name="Efthymiou S."/>
            <person name="Karimiani E.G."/>
            <person name="Hempel M."/>
            <person name="Normand E.A."/>
            <person name="Rudnik-Schoeneborn S."/>
            <person name="Schatz U.A."/>
            <person name="Baggelaar M.P."/>
            <person name="Ilyas M."/>
            <person name="Sultan T."/>
            <person name="Alvi J.R."/>
            <person name="Ganieva M."/>
            <person name="Fowler B."/>
            <person name="Aanicai R."/>
            <person name="Tayfun G.A."/>
            <person name="Al Saman A."/>
            <person name="Alswaid A."/>
            <person name="Amiri N."/>
            <person name="Asilova N."/>
            <person name="Shotelersuk V."/>
            <person name="Yeetong P."/>
            <person name="Azam M."/>
            <person name="Babaei M."/>
            <person name="Monajemi G.B."/>
            <person name="Mohammadi P."/>
            <person name="Samie S."/>
            <person name="Banu S.H."/>
            <person name="Pinto Basto J."/>
            <person name="Kortuem F."/>
            <person name="Bauer M."/>
            <person name="Bauer P."/>
            <person name="Beetz C."/>
            <person name="Garshasbi M."/>
            <person name="Issa A.H."/>
            <person name="Eyaid W."/>
            <person name="Ahmed H."/>
            <person name="Hashemi N."/>
            <person name="Hassanpour K."/>
            <person name="Herman I."/>
            <person name="Ibrohimov S."/>
            <person name="Abdul-Majeed B.A."/>
            <person name="Imdad M."/>
            <person name="Isrofilov M."/>
            <person name="Kaiyal Q."/>
            <person name="Khan S."/>
            <person name="Kirmse B."/>
            <person name="Koster J."/>
            <person name="Lourenco C.M."/>
            <person name="Mitani T."/>
            <person name="Moldovan O."/>
            <person name="Murphy D."/>
            <person name="Najafi M."/>
            <person name="Pehlivan D."/>
            <person name="Rocha M.E."/>
            <person name="Salpietro V."/>
            <person name="Schmidts M."/>
            <person name="Shalata A."/>
            <person name="Mahroum M."/>
            <person name="Talbeya J.K."/>
            <person name="Taylor R.W."/>
            <person name="Vazquez D."/>
            <person name="Vetro A."/>
            <person name="Waterham H.R."/>
            <person name="Zaman M."/>
            <person name="Schrader T.A."/>
            <person name="Chung W.K."/>
            <person name="Guerrini R."/>
            <person name="Lupski J.R."/>
            <person name="Gleeson J."/>
            <person name="Suri M."/>
            <person name="Jamshidi Y."/>
            <person name="Bhatia K.P."/>
            <person name="Vona B."/>
            <person name="Schrader M."/>
            <person name="Severino M."/>
            <person name="Guille M."/>
            <person name="Tate E.W."/>
            <person name="Varshney G.K."/>
            <person name="Houlden H."/>
            <person name="Maroofian R."/>
        </authorList>
    </citation>
    <scope>DISRUPTION PHENOTYPE</scope>
    <scope>FUNCTION</scope>
    <scope>TISSUE SPECIFICITY</scope>
    <scope>DEVELOPMENTAL STAGE</scope>
</reference>
<gene>
    <name type="primary">acbd6</name>
    <name type="ORF">wu:fc18d09</name>
</gene>
<protein>
    <recommendedName>
        <fullName>Acyl-CoA-binding domain-containing protein 6</fullName>
    </recommendedName>
</protein>
<organism>
    <name type="scientific">Danio rerio</name>
    <name type="common">Zebrafish</name>
    <name type="synonym">Brachydanio rerio</name>
    <dbReference type="NCBI Taxonomy" id="7955"/>
    <lineage>
        <taxon>Eukaryota</taxon>
        <taxon>Metazoa</taxon>
        <taxon>Chordata</taxon>
        <taxon>Craniata</taxon>
        <taxon>Vertebrata</taxon>
        <taxon>Euteleostomi</taxon>
        <taxon>Actinopterygii</taxon>
        <taxon>Neopterygii</taxon>
        <taxon>Teleostei</taxon>
        <taxon>Ostariophysi</taxon>
        <taxon>Cypriniformes</taxon>
        <taxon>Danionidae</taxon>
        <taxon>Danioninae</taxon>
        <taxon>Danio</taxon>
    </lineage>
</organism>
<proteinExistence type="evidence at transcript level"/>
<name>ACBD6_DANRE</name>